<comment type="function">
    <text evidence="1">Regulatory subunit of the poly(A)-nuclease (PAN) deadenylation complex, one of two cytoplasmic mRNA deadenylases involved in mRNA turnover. PAN specifically shortens poly(A) tails of RNA and the activity is stimulated by poly(A)-binding protein pab1. PAN deadenylation is followed by rapid degradation of the shortened mRNA tails by the CCR4-NOT complex. Deadenylated mRNAs are then degraded by two alternative mechanisms, namely exosome-mediated 3'-5' exonucleolytic degradation, or deadenylation-dependent mRNA decaping and subsequent 5'-3' exonucleolytic degradation by xrn1. May also be involved in post-transcriptional maturation of mRNA poly(A) tails. pan3 acts as a positive regulator for PAN activity, recruiting the catalytic subunit pan2 to mRNA via its interaction with RNA and with pab1.</text>
</comment>
<comment type="subunit">
    <text evidence="1">Homodimer. Forms a heterotrimer with a catalytic subunit pan2 to form the poly(A)-nuclease (PAN) deadenylation complex. Interacts (via PAM-2 motif) with poly(A)-binding protein pab1 (via PABC domain), conferring substrate specificity of the enzyme complex.</text>
</comment>
<comment type="subcellular location">
    <subcellularLocation>
        <location evidence="1">Cytoplasm</location>
    </subcellularLocation>
</comment>
<comment type="domain">
    <text evidence="1">The N-terminal zinc finger binds to poly(A) RNA.</text>
</comment>
<comment type="domain">
    <text evidence="1">Contains a pseudokinase domain. The protein kinase domain is predicted to be catalytically inactive because some of the residues important for catalytic activity are substituted and it lacks the equivalent of the binding site for a peptide substrate. However, it has retained an ATP-binding site and ATP-binding is required for mRNA degradation, stimulating the activity of the pan2 nuclease in vitro. The nucleotide-binding site is juxtaposed to the RNase active site of pan2 in the complex and may actually bind nucleosides of a poly(A) RNA rather than ATP, feeding the poly(A)-tail to the active site of the deadenylase and thus increasing the efficiency with which this distributive enzyme degrades oligo(A) RNAs.</text>
</comment>
<comment type="domain">
    <text evidence="1">The pseudokinase domain, the coiled-coil (CC), and C-terminal knob domain (CK) form a structural unit (PKC) that forms an extensive high-affinity interaction surface for pan2.</text>
</comment>
<comment type="similarity">
    <text evidence="1">Belongs to the protein kinase superfamily. PAN3 family.</text>
</comment>
<comment type="sequence caution" evidence="3">
    <conflict type="erroneous gene model prediction">
        <sequence resource="EMBL-CDS" id="CAF32146"/>
    </conflict>
</comment>
<comment type="sequence caution" evidence="3">
    <conflict type="erroneous gene model prediction">
        <sequence resource="EMBL-CDS" id="EAL90763"/>
    </conflict>
</comment>
<dbReference type="EMBL" id="BX649607">
    <property type="protein sequence ID" value="CAF32146.1"/>
    <property type="status" value="ALT_SEQ"/>
    <property type="molecule type" value="Genomic_DNA"/>
</dbReference>
<dbReference type="EMBL" id="AAHF01000004">
    <property type="protein sequence ID" value="EAL90763.1"/>
    <property type="status" value="ALT_SEQ"/>
    <property type="molecule type" value="Genomic_DNA"/>
</dbReference>
<dbReference type="RefSeq" id="XP_752801.1">
    <property type="nucleotide sequence ID" value="XM_747708.1"/>
</dbReference>
<dbReference type="SMR" id="Q6MY57"/>
<dbReference type="FunCoup" id="Q6MY57">
    <property type="interactions" value="627"/>
</dbReference>
<dbReference type="STRING" id="330879.Q6MY57"/>
<dbReference type="GeneID" id="3509812"/>
<dbReference type="KEGG" id="afm:AFUA_1G14310"/>
<dbReference type="eggNOG" id="KOG3741">
    <property type="taxonomic scope" value="Eukaryota"/>
</dbReference>
<dbReference type="InParanoid" id="Q6MY57"/>
<dbReference type="OrthoDB" id="204958at2759"/>
<dbReference type="Proteomes" id="UP000002530">
    <property type="component" value="Chromosome 1"/>
</dbReference>
<dbReference type="GO" id="GO:0000932">
    <property type="term" value="C:P-body"/>
    <property type="evidence" value="ECO:0000318"/>
    <property type="project" value="GO_Central"/>
</dbReference>
<dbReference type="GO" id="GO:0031251">
    <property type="term" value="C:PAN complex"/>
    <property type="evidence" value="ECO:0000318"/>
    <property type="project" value="GO_Central"/>
</dbReference>
<dbReference type="GO" id="GO:0005524">
    <property type="term" value="F:ATP binding"/>
    <property type="evidence" value="ECO:0007669"/>
    <property type="project" value="UniProtKB-UniRule"/>
</dbReference>
<dbReference type="GO" id="GO:0008143">
    <property type="term" value="F:poly(A) binding"/>
    <property type="evidence" value="ECO:0000318"/>
    <property type="project" value="GO_Central"/>
</dbReference>
<dbReference type="GO" id="GO:0004672">
    <property type="term" value="F:protein kinase activity"/>
    <property type="evidence" value="ECO:0007669"/>
    <property type="project" value="InterPro"/>
</dbReference>
<dbReference type="GO" id="GO:0008270">
    <property type="term" value="F:zinc ion binding"/>
    <property type="evidence" value="ECO:0007669"/>
    <property type="project" value="UniProtKB-KW"/>
</dbReference>
<dbReference type="GO" id="GO:0006397">
    <property type="term" value="P:mRNA processing"/>
    <property type="evidence" value="ECO:0007669"/>
    <property type="project" value="UniProtKB-KW"/>
</dbReference>
<dbReference type="GO" id="GO:0000289">
    <property type="term" value="P:nuclear-transcribed mRNA poly(A) tail shortening"/>
    <property type="evidence" value="ECO:0000318"/>
    <property type="project" value="GO_Central"/>
</dbReference>
<dbReference type="FunFam" id="1.10.287.3700:FF:000001">
    <property type="entry name" value="PAN2-PAN3 deadenylation complex subunit PAN3"/>
    <property type="match status" value="1"/>
</dbReference>
<dbReference type="FunFam" id="1.10.510.10:FF:000520">
    <property type="entry name" value="PAN2-PAN3 deadenylation complex subunit PAN3"/>
    <property type="match status" value="1"/>
</dbReference>
<dbReference type="FunFam" id="1.20.5.5160:FF:000002">
    <property type="entry name" value="PAN2-PAN3 deadenylation complex subunit PAN3"/>
    <property type="match status" value="1"/>
</dbReference>
<dbReference type="Gene3D" id="1.10.287.3700">
    <property type="match status" value="1"/>
</dbReference>
<dbReference type="Gene3D" id="1.20.5.5160">
    <property type="match status" value="1"/>
</dbReference>
<dbReference type="Gene3D" id="6.10.250.3160">
    <property type="match status" value="1"/>
</dbReference>
<dbReference type="Gene3D" id="1.10.510.10">
    <property type="entry name" value="Transferase(Phosphotransferase) domain 1"/>
    <property type="match status" value="1"/>
</dbReference>
<dbReference type="HAMAP" id="MF_03181">
    <property type="entry name" value="PAN3"/>
    <property type="match status" value="1"/>
</dbReference>
<dbReference type="InterPro" id="IPR011009">
    <property type="entry name" value="Kinase-like_dom_sf"/>
</dbReference>
<dbReference type="InterPro" id="IPR030844">
    <property type="entry name" value="PAN3"/>
</dbReference>
<dbReference type="InterPro" id="IPR041332">
    <property type="entry name" value="Pan3_PK"/>
</dbReference>
<dbReference type="InterPro" id="IPR000719">
    <property type="entry name" value="Prot_kinase_dom"/>
</dbReference>
<dbReference type="InterPro" id="IPR000571">
    <property type="entry name" value="Znf_CCCH"/>
</dbReference>
<dbReference type="PANTHER" id="PTHR12272">
    <property type="entry name" value="DEADENYLATION COMPLEX SUBUNIT PAN3"/>
    <property type="match status" value="1"/>
</dbReference>
<dbReference type="PANTHER" id="PTHR12272:SF11">
    <property type="entry name" value="PAN2-PAN3 DEADENYLATION COMPLEX SUBUNIT PAN3"/>
    <property type="match status" value="1"/>
</dbReference>
<dbReference type="Pfam" id="PF18101">
    <property type="entry name" value="Pan3_PK"/>
    <property type="match status" value="1"/>
</dbReference>
<dbReference type="SUPFAM" id="SSF56112">
    <property type="entry name" value="Protein kinase-like (PK-like)"/>
    <property type="match status" value="1"/>
</dbReference>
<dbReference type="PROSITE" id="PS50011">
    <property type="entry name" value="PROTEIN_KINASE_DOM"/>
    <property type="match status" value="1"/>
</dbReference>
<dbReference type="PROSITE" id="PS50103">
    <property type="entry name" value="ZF_C3H1"/>
    <property type="match status" value="1"/>
</dbReference>
<keyword id="KW-0067">ATP-binding</keyword>
<keyword id="KW-0175">Coiled coil</keyword>
<keyword id="KW-0963">Cytoplasm</keyword>
<keyword id="KW-0479">Metal-binding</keyword>
<keyword id="KW-0507">mRNA processing</keyword>
<keyword id="KW-0547">Nucleotide-binding</keyword>
<keyword id="KW-1185">Reference proteome</keyword>
<keyword id="KW-0862">Zinc</keyword>
<keyword id="KW-0863">Zinc-finger</keyword>
<feature type="chain" id="PRO_0000295358" description="PAN2-PAN3 deadenylation complex subunit PAN3">
    <location>
        <begin position="1"/>
        <end position="662"/>
    </location>
</feature>
<feature type="zinc finger region" description="C3H1-type" evidence="1">
    <location>
        <begin position="26"/>
        <end position="55"/>
    </location>
</feature>
<feature type="region of interest" description="Disordered" evidence="2">
    <location>
        <begin position="1"/>
        <end position="29"/>
    </location>
</feature>
<feature type="region of interest" description="Disordered" evidence="2">
    <location>
        <begin position="53"/>
        <end position="133"/>
    </location>
</feature>
<feature type="region of interest" description="Pseudokinase domain" evidence="1">
    <location>
        <begin position="263"/>
        <end position="525"/>
    </location>
</feature>
<feature type="region of interest" description="Knob domain" evidence="1">
    <location>
        <begin position="565"/>
        <end position="662"/>
    </location>
</feature>
<feature type="coiled-coil region" evidence="1">
    <location>
        <begin position="526"/>
        <end position="564"/>
    </location>
</feature>
<feature type="compositionally biased region" description="Low complexity" evidence="2">
    <location>
        <begin position="75"/>
        <end position="102"/>
    </location>
</feature>
<feature type="compositionally biased region" description="Polar residues" evidence="2">
    <location>
        <begin position="115"/>
        <end position="133"/>
    </location>
</feature>
<feature type="binding site" evidence="1">
    <location>
        <position position="315"/>
    </location>
    <ligand>
        <name>ATP</name>
        <dbReference type="ChEBI" id="CHEBI:30616"/>
    </ligand>
</feature>
<feature type="binding site" evidence="1">
    <location>
        <begin position="364"/>
        <end position="371"/>
    </location>
    <ligand>
        <name>ATP</name>
        <dbReference type="ChEBI" id="CHEBI:30616"/>
    </ligand>
</feature>
<feature type="binding site" evidence="1">
    <location>
        <begin position="425"/>
        <end position="426"/>
    </location>
    <ligand>
        <name>ATP</name>
        <dbReference type="ChEBI" id="CHEBI:30616"/>
    </ligand>
</feature>
<evidence type="ECO:0000255" key="1">
    <source>
        <dbReference type="HAMAP-Rule" id="MF_03181"/>
    </source>
</evidence>
<evidence type="ECO:0000256" key="2">
    <source>
        <dbReference type="SAM" id="MobiDB-lite"/>
    </source>
</evidence>
<evidence type="ECO:0000305" key="3"/>
<proteinExistence type="inferred from homology"/>
<name>PAN3_ASPFU</name>
<organism>
    <name type="scientific">Aspergillus fumigatus (strain ATCC MYA-4609 / CBS 101355 / FGSC A1100 / Af293)</name>
    <name type="common">Neosartorya fumigata</name>
    <dbReference type="NCBI Taxonomy" id="330879"/>
    <lineage>
        <taxon>Eukaryota</taxon>
        <taxon>Fungi</taxon>
        <taxon>Dikarya</taxon>
        <taxon>Ascomycota</taxon>
        <taxon>Pezizomycotina</taxon>
        <taxon>Eurotiomycetes</taxon>
        <taxon>Eurotiomycetidae</taxon>
        <taxon>Eurotiales</taxon>
        <taxon>Aspergillaceae</taxon>
        <taxon>Aspergillus</taxon>
        <taxon>Aspergillus subgen. Fumigati</taxon>
    </lineage>
</organism>
<reference key="1">
    <citation type="journal article" date="2004" name="Fungal Genet. Biol.">
        <title>Insight into the genome of Aspergillus fumigatus: analysis of a 922 kb region encompassing the nitrate assimilation gene cluster.</title>
        <authorList>
            <person name="Pain A."/>
            <person name="Woodward J.R."/>
            <person name="Quail M.A."/>
            <person name="Anderson M.J."/>
            <person name="Clark R."/>
            <person name="Collins M."/>
            <person name="Fosker N."/>
            <person name="Fraser A."/>
            <person name="Harris D.E."/>
            <person name="Larke N."/>
            <person name="Murphy L.D."/>
            <person name="Humphray S."/>
            <person name="O'Neil S."/>
            <person name="Pertea M."/>
            <person name="Price C."/>
            <person name="Rabbinowitsch E."/>
            <person name="Rajandream M.A."/>
            <person name="Salzberg S.L."/>
            <person name="Saunders D."/>
            <person name="Seeger K."/>
            <person name="Sharp S."/>
            <person name="Warren T."/>
            <person name="Denning D.W."/>
            <person name="Barrell B.G."/>
            <person name="Hall N."/>
        </authorList>
    </citation>
    <scope>NUCLEOTIDE SEQUENCE [LARGE SCALE GENOMIC DNA]</scope>
    <source>
        <strain>ATCC MYA-4609 / CBS 101355 / FGSC A1100 / Af293</strain>
    </source>
</reference>
<reference key="2">
    <citation type="journal article" date="2005" name="Nature">
        <title>Genomic sequence of the pathogenic and allergenic filamentous fungus Aspergillus fumigatus.</title>
        <authorList>
            <person name="Nierman W.C."/>
            <person name="Pain A."/>
            <person name="Anderson M.J."/>
            <person name="Wortman J.R."/>
            <person name="Kim H.S."/>
            <person name="Arroyo J."/>
            <person name="Berriman M."/>
            <person name="Abe K."/>
            <person name="Archer D.B."/>
            <person name="Bermejo C."/>
            <person name="Bennett J.W."/>
            <person name="Bowyer P."/>
            <person name="Chen D."/>
            <person name="Collins M."/>
            <person name="Coulsen R."/>
            <person name="Davies R."/>
            <person name="Dyer P.S."/>
            <person name="Farman M.L."/>
            <person name="Fedorova N."/>
            <person name="Fedorova N.D."/>
            <person name="Feldblyum T.V."/>
            <person name="Fischer R."/>
            <person name="Fosker N."/>
            <person name="Fraser A."/>
            <person name="Garcia J.L."/>
            <person name="Garcia M.J."/>
            <person name="Goble A."/>
            <person name="Goldman G.H."/>
            <person name="Gomi K."/>
            <person name="Griffith-Jones S."/>
            <person name="Gwilliam R."/>
            <person name="Haas B.J."/>
            <person name="Haas H."/>
            <person name="Harris D.E."/>
            <person name="Horiuchi H."/>
            <person name="Huang J."/>
            <person name="Humphray S."/>
            <person name="Jimenez J."/>
            <person name="Keller N."/>
            <person name="Khouri H."/>
            <person name="Kitamoto K."/>
            <person name="Kobayashi T."/>
            <person name="Konzack S."/>
            <person name="Kulkarni R."/>
            <person name="Kumagai T."/>
            <person name="Lafton A."/>
            <person name="Latge J.-P."/>
            <person name="Li W."/>
            <person name="Lord A."/>
            <person name="Lu C."/>
            <person name="Majoros W.H."/>
            <person name="May G.S."/>
            <person name="Miller B.L."/>
            <person name="Mohamoud Y."/>
            <person name="Molina M."/>
            <person name="Monod M."/>
            <person name="Mouyna I."/>
            <person name="Mulligan S."/>
            <person name="Murphy L.D."/>
            <person name="O'Neil S."/>
            <person name="Paulsen I."/>
            <person name="Penalva M.A."/>
            <person name="Pertea M."/>
            <person name="Price C."/>
            <person name="Pritchard B.L."/>
            <person name="Quail M.A."/>
            <person name="Rabbinowitsch E."/>
            <person name="Rawlins N."/>
            <person name="Rajandream M.A."/>
            <person name="Reichard U."/>
            <person name="Renauld H."/>
            <person name="Robson G.D."/>
            <person name="Rodriguez de Cordoba S."/>
            <person name="Rodriguez-Pena J.M."/>
            <person name="Ronning C.M."/>
            <person name="Rutter S."/>
            <person name="Salzberg S.L."/>
            <person name="Sanchez M."/>
            <person name="Sanchez-Ferrero J.C."/>
            <person name="Saunders D."/>
            <person name="Seeger K."/>
            <person name="Squares R."/>
            <person name="Squares S."/>
            <person name="Takeuchi M."/>
            <person name="Tekaia F."/>
            <person name="Turner G."/>
            <person name="Vazquez de Aldana C.R."/>
            <person name="Weidman J."/>
            <person name="White O."/>
            <person name="Woodward J.R."/>
            <person name="Yu J.-H."/>
            <person name="Fraser C.M."/>
            <person name="Galagan J.E."/>
            <person name="Asai K."/>
            <person name="Machida M."/>
            <person name="Hall N."/>
            <person name="Barrell B.G."/>
            <person name="Denning D.W."/>
        </authorList>
    </citation>
    <scope>NUCLEOTIDE SEQUENCE [LARGE SCALE GENOMIC DNA]</scope>
    <source>
        <strain>ATCC MYA-4609 / CBS 101355 / FGSC A1100 / Af293</strain>
    </source>
</reference>
<gene>
    <name evidence="1" type="primary">pan3</name>
    <name type="ORF">AfA10A1.020c</name>
    <name type="ORF">AFUA_1G14310</name>
</gene>
<sequence length="662" mass="73520">MASAGKPALDDSRRGTGSPKIKGRENAKDTLCRNITIYGRCRYEDKGCAFNHDPHKVNSSNQSDSKKRFNVDSPSFTPSLLSSNGSSPTSTPATTKKMTTISPKAANAAPFQPRSVVSRSNASTPGLRQDTVTPDWTVAEVQEFVPQGFDNSHLAALQGNGNGPITSTSPFDPFVTTPTPLSAGGAVGPVQPNPYSHDAAAALGGAAFFPGAAGFQQPVQYHLYAPIGPHNQNTLGYQRNVHDLFLPNDFREELQKKAAATLQTLPNTQLPAQIDYFHSLVPLDLNHQKNATIFGFPSWVYKAQSSKDGNYYALRRLEGFRLTNEKAIRSVQAWKRVCNGSVVTVHDAFTSRSFQDSSLIFVTDYHPLSKTLAEQHLGAGQQRFQGRHNVQHIPEQILWGYMTQIANALKAIHSNGLAARVIDASKILLTGKNRIRLNACAIMDVVQFDSQRTVADLQRQDLVNFGQLIVTLGANSPTVMHNPTKAMEHFTRAYSPQLKNSVFWLLNGMQKDQDRNIDVFITGISSQLMSTFDSALHLDDQLTSDLSRELENGRLVRLMAKLNFVNERPEYEHDRQWSENGERYFLKIFRDYVFHQVDAQGDPVVDLGHVITCLNKLDAGTEEKITLISRDEQSCFIVSYKELKKALESSFQALMKPARRMH</sequence>
<protein>
    <recommendedName>
        <fullName evidence="1">PAN2-PAN3 deadenylation complex subunit PAN3</fullName>
    </recommendedName>
    <alternativeName>
        <fullName evidence="1">PAB1P-dependent poly(A)-specific ribonuclease</fullName>
    </alternativeName>
    <alternativeName>
        <fullName evidence="1">Poly(A)-nuclease deadenylation complex subunit 3</fullName>
        <shortName evidence="1">PAN deadenylation complex subunit 3</shortName>
    </alternativeName>
</protein>
<accession>Q6MY57</accession>
<accession>Q4WS19</accession>